<reference key="1">
    <citation type="journal article" date="2008" name="J. Bacteriol.">
        <title>The complete genome sequence of Actinobacillus pleuropneumoniae L20 (serotype 5b).</title>
        <authorList>
            <person name="Foote S.J."/>
            <person name="Bosse J.T."/>
            <person name="Bouevitch A.B."/>
            <person name="Langford P.R."/>
            <person name="Young N.M."/>
            <person name="Nash J.H.E."/>
        </authorList>
    </citation>
    <scope>NUCLEOTIDE SEQUENCE [LARGE SCALE GENOMIC DNA]</scope>
    <source>
        <strain>L20</strain>
    </source>
</reference>
<gene>
    <name evidence="1" type="primary">pyrE</name>
    <name type="ordered locus">APL_0318</name>
</gene>
<proteinExistence type="inferred from homology"/>
<sequence length="213" mass="23684">MEQYKHDFIEFALSRNVLKFGEFTLKSGRKSPYFFNAGLFNTGRDLAKLGEFYAQAIQASGLNFDVLFGPAYKGIPIATTVAVALVNQFDVDKPCCFNRKEAKDHGEGGNLIGSPLKGRILLVDDVITAGTAIRESMEIINANQAELAGVLIALNRKEKGKGELSAIQEVERDYGCQVFSIIDFDDLIQFIEKSEQYAPYLASMRAYREQYGV</sequence>
<protein>
    <recommendedName>
        <fullName evidence="1">Orotate phosphoribosyltransferase</fullName>
        <shortName evidence="1">OPRT</shortName>
        <shortName evidence="1">OPRTase</shortName>
        <ecNumber evidence="1">2.4.2.10</ecNumber>
    </recommendedName>
</protein>
<name>PYRE_ACTP2</name>
<comment type="function">
    <text evidence="1">Catalyzes the transfer of a ribosyl phosphate group from 5-phosphoribose 1-diphosphate to orotate, leading to the formation of orotidine monophosphate (OMP).</text>
</comment>
<comment type="catalytic activity">
    <reaction evidence="1">
        <text>orotidine 5'-phosphate + diphosphate = orotate + 5-phospho-alpha-D-ribose 1-diphosphate</text>
        <dbReference type="Rhea" id="RHEA:10380"/>
        <dbReference type="ChEBI" id="CHEBI:30839"/>
        <dbReference type="ChEBI" id="CHEBI:33019"/>
        <dbReference type="ChEBI" id="CHEBI:57538"/>
        <dbReference type="ChEBI" id="CHEBI:58017"/>
        <dbReference type="EC" id="2.4.2.10"/>
    </reaction>
</comment>
<comment type="cofactor">
    <cofactor evidence="1">
        <name>Mg(2+)</name>
        <dbReference type="ChEBI" id="CHEBI:18420"/>
    </cofactor>
</comment>
<comment type="pathway">
    <text evidence="1">Pyrimidine metabolism; UMP biosynthesis via de novo pathway; UMP from orotate: step 1/2.</text>
</comment>
<comment type="subunit">
    <text evidence="1">Homodimer.</text>
</comment>
<comment type="similarity">
    <text evidence="1">Belongs to the purine/pyrimidine phosphoribosyltransferase family. PyrE subfamily.</text>
</comment>
<dbReference type="EC" id="2.4.2.10" evidence="1"/>
<dbReference type="EMBL" id="CP000569">
    <property type="protein sequence ID" value="ABN73422.1"/>
    <property type="molecule type" value="Genomic_DNA"/>
</dbReference>
<dbReference type="RefSeq" id="WP_005596245.1">
    <property type="nucleotide sequence ID" value="NC_009053.1"/>
</dbReference>
<dbReference type="SMR" id="A3MZ36"/>
<dbReference type="STRING" id="416269.APL_0318"/>
<dbReference type="EnsemblBacteria" id="ABN73422">
    <property type="protein sequence ID" value="ABN73422"/>
    <property type="gene ID" value="APL_0318"/>
</dbReference>
<dbReference type="GeneID" id="48598473"/>
<dbReference type="KEGG" id="apl:APL_0318"/>
<dbReference type="eggNOG" id="COG0461">
    <property type="taxonomic scope" value="Bacteria"/>
</dbReference>
<dbReference type="HOGENOM" id="CLU_074878_0_1_6"/>
<dbReference type="UniPathway" id="UPA00070">
    <property type="reaction ID" value="UER00119"/>
</dbReference>
<dbReference type="Proteomes" id="UP000001432">
    <property type="component" value="Chromosome"/>
</dbReference>
<dbReference type="GO" id="GO:0005737">
    <property type="term" value="C:cytoplasm"/>
    <property type="evidence" value="ECO:0007669"/>
    <property type="project" value="TreeGrafter"/>
</dbReference>
<dbReference type="GO" id="GO:0000287">
    <property type="term" value="F:magnesium ion binding"/>
    <property type="evidence" value="ECO:0007669"/>
    <property type="project" value="UniProtKB-UniRule"/>
</dbReference>
<dbReference type="GO" id="GO:0004588">
    <property type="term" value="F:orotate phosphoribosyltransferase activity"/>
    <property type="evidence" value="ECO:0007669"/>
    <property type="project" value="UniProtKB-UniRule"/>
</dbReference>
<dbReference type="GO" id="GO:0006207">
    <property type="term" value="P:'de novo' pyrimidine nucleobase biosynthetic process"/>
    <property type="evidence" value="ECO:0007669"/>
    <property type="project" value="TreeGrafter"/>
</dbReference>
<dbReference type="GO" id="GO:0044205">
    <property type="term" value="P:'de novo' UMP biosynthetic process"/>
    <property type="evidence" value="ECO:0007669"/>
    <property type="project" value="UniProtKB-UniRule"/>
</dbReference>
<dbReference type="GO" id="GO:0046132">
    <property type="term" value="P:pyrimidine ribonucleoside biosynthetic process"/>
    <property type="evidence" value="ECO:0007669"/>
    <property type="project" value="TreeGrafter"/>
</dbReference>
<dbReference type="CDD" id="cd06223">
    <property type="entry name" value="PRTases_typeI"/>
    <property type="match status" value="1"/>
</dbReference>
<dbReference type="FunFam" id="3.40.50.2020:FF:000008">
    <property type="entry name" value="Orotate phosphoribosyltransferase"/>
    <property type="match status" value="1"/>
</dbReference>
<dbReference type="Gene3D" id="3.40.50.2020">
    <property type="match status" value="1"/>
</dbReference>
<dbReference type="HAMAP" id="MF_01208">
    <property type="entry name" value="PyrE"/>
    <property type="match status" value="1"/>
</dbReference>
<dbReference type="InterPro" id="IPR023031">
    <property type="entry name" value="OPRT"/>
</dbReference>
<dbReference type="InterPro" id="IPR004467">
    <property type="entry name" value="Or_phspho_trans_dom"/>
</dbReference>
<dbReference type="InterPro" id="IPR000836">
    <property type="entry name" value="PRibTrfase_dom"/>
</dbReference>
<dbReference type="InterPro" id="IPR029057">
    <property type="entry name" value="PRTase-like"/>
</dbReference>
<dbReference type="NCBIfam" id="TIGR00336">
    <property type="entry name" value="pyrE"/>
    <property type="match status" value="1"/>
</dbReference>
<dbReference type="PANTHER" id="PTHR46683">
    <property type="entry name" value="OROTATE PHOSPHORIBOSYLTRANSFERASE 1-RELATED"/>
    <property type="match status" value="1"/>
</dbReference>
<dbReference type="PANTHER" id="PTHR46683:SF1">
    <property type="entry name" value="OROTATE PHOSPHORIBOSYLTRANSFERASE 1-RELATED"/>
    <property type="match status" value="1"/>
</dbReference>
<dbReference type="Pfam" id="PF00156">
    <property type="entry name" value="Pribosyltran"/>
    <property type="match status" value="1"/>
</dbReference>
<dbReference type="SUPFAM" id="SSF53271">
    <property type="entry name" value="PRTase-like"/>
    <property type="match status" value="1"/>
</dbReference>
<dbReference type="PROSITE" id="PS00103">
    <property type="entry name" value="PUR_PYR_PR_TRANSFER"/>
    <property type="match status" value="1"/>
</dbReference>
<feature type="chain" id="PRO_1000066200" description="Orotate phosphoribosyltransferase">
    <location>
        <begin position="1"/>
        <end position="213"/>
    </location>
</feature>
<feature type="binding site" description="in other chain" evidence="1">
    <location>
        <position position="26"/>
    </location>
    <ligand>
        <name>5-phospho-alpha-D-ribose 1-diphosphate</name>
        <dbReference type="ChEBI" id="CHEBI:58017"/>
        <note>ligand shared between dimeric partners</note>
    </ligand>
</feature>
<feature type="binding site" evidence="1">
    <location>
        <begin position="34"/>
        <end position="35"/>
    </location>
    <ligand>
        <name>orotate</name>
        <dbReference type="ChEBI" id="CHEBI:30839"/>
    </ligand>
</feature>
<feature type="binding site" description="in other chain" evidence="1">
    <location>
        <begin position="72"/>
        <end position="73"/>
    </location>
    <ligand>
        <name>5-phospho-alpha-D-ribose 1-diphosphate</name>
        <dbReference type="ChEBI" id="CHEBI:58017"/>
        <note>ligand shared between dimeric partners</note>
    </ligand>
</feature>
<feature type="binding site" evidence="1">
    <location>
        <position position="99"/>
    </location>
    <ligand>
        <name>5-phospho-alpha-D-ribose 1-diphosphate</name>
        <dbReference type="ChEBI" id="CHEBI:58017"/>
        <note>ligand shared between dimeric partners</note>
    </ligand>
</feature>
<feature type="binding site" description="in other chain" evidence="1">
    <location>
        <position position="100"/>
    </location>
    <ligand>
        <name>5-phospho-alpha-D-ribose 1-diphosphate</name>
        <dbReference type="ChEBI" id="CHEBI:58017"/>
        <note>ligand shared between dimeric partners</note>
    </ligand>
</feature>
<feature type="binding site" evidence="1">
    <location>
        <position position="103"/>
    </location>
    <ligand>
        <name>5-phospho-alpha-D-ribose 1-diphosphate</name>
        <dbReference type="ChEBI" id="CHEBI:58017"/>
        <note>ligand shared between dimeric partners</note>
    </ligand>
</feature>
<feature type="binding site" evidence="1">
    <location>
        <position position="105"/>
    </location>
    <ligand>
        <name>5-phospho-alpha-D-ribose 1-diphosphate</name>
        <dbReference type="ChEBI" id="CHEBI:58017"/>
        <note>ligand shared between dimeric partners</note>
    </ligand>
</feature>
<feature type="binding site" description="in other chain" evidence="1">
    <location>
        <begin position="124"/>
        <end position="132"/>
    </location>
    <ligand>
        <name>5-phospho-alpha-D-ribose 1-diphosphate</name>
        <dbReference type="ChEBI" id="CHEBI:58017"/>
        <note>ligand shared between dimeric partners</note>
    </ligand>
</feature>
<feature type="binding site" evidence="1">
    <location>
        <position position="128"/>
    </location>
    <ligand>
        <name>orotate</name>
        <dbReference type="ChEBI" id="CHEBI:30839"/>
    </ligand>
</feature>
<feature type="binding site" evidence="1">
    <location>
        <position position="156"/>
    </location>
    <ligand>
        <name>orotate</name>
        <dbReference type="ChEBI" id="CHEBI:30839"/>
    </ligand>
</feature>
<keyword id="KW-0328">Glycosyltransferase</keyword>
<keyword id="KW-0460">Magnesium</keyword>
<keyword id="KW-0665">Pyrimidine biosynthesis</keyword>
<keyword id="KW-1185">Reference proteome</keyword>
<keyword id="KW-0808">Transferase</keyword>
<accession>A3MZ36</accession>
<evidence type="ECO:0000255" key="1">
    <source>
        <dbReference type="HAMAP-Rule" id="MF_01208"/>
    </source>
</evidence>
<organism>
    <name type="scientific">Actinobacillus pleuropneumoniae serotype 5b (strain L20)</name>
    <dbReference type="NCBI Taxonomy" id="416269"/>
    <lineage>
        <taxon>Bacteria</taxon>
        <taxon>Pseudomonadati</taxon>
        <taxon>Pseudomonadota</taxon>
        <taxon>Gammaproteobacteria</taxon>
        <taxon>Pasteurellales</taxon>
        <taxon>Pasteurellaceae</taxon>
        <taxon>Actinobacillus</taxon>
    </lineage>
</organism>